<keyword id="KW-0004">4Fe-4S</keyword>
<keyword id="KW-0963">Cytoplasm</keyword>
<keyword id="KW-1015">Disulfide bond</keyword>
<keyword id="KW-0408">Iron</keyword>
<keyword id="KW-0411">Iron-sulfur</keyword>
<keyword id="KW-0479">Metal-binding</keyword>
<keyword id="KW-0489">Methyltransferase</keyword>
<keyword id="KW-1185">Reference proteome</keyword>
<keyword id="KW-0698">rRNA processing</keyword>
<keyword id="KW-0949">S-adenosyl-L-methionine</keyword>
<keyword id="KW-0808">Transferase</keyword>
<keyword id="KW-0819">tRNA processing</keyword>
<name>RLMN_BACTN</name>
<protein>
    <recommendedName>
        <fullName evidence="1">Probable dual-specificity RNA methyltransferase RlmN</fullName>
        <ecNumber evidence="1">2.1.1.192</ecNumber>
    </recommendedName>
    <alternativeName>
        <fullName evidence="1">23S rRNA (adenine(2503)-C(2))-methyltransferase</fullName>
    </alternativeName>
    <alternativeName>
        <fullName evidence="1">23S rRNA m2A2503 methyltransferase</fullName>
    </alternativeName>
    <alternativeName>
        <fullName evidence="1">Ribosomal RNA large subunit methyltransferase N</fullName>
    </alternativeName>
    <alternativeName>
        <fullName evidence="1">tRNA (adenine(37)-C(2))-methyltransferase</fullName>
    </alternativeName>
    <alternativeName>
        <fullName evidence="1">tRNA m2A37 methyltransferase</fullName>
    </alternativeName>
</protein>
<comment type="function">
    <text evidence="1">Specifically methylates position 2 of adenine 2503 in 23S rRNA and position 2 of adenine 37 in tRNAs.</text>
</comment>
<comment type="catalytic activity">
    <reaction evidence="1">
        <text>adenosine(2503) in 23S rRNA + 2 reduced [2Fe-2S]-[ferredoxin] + 2 S-adenosyl-L-methionine = 2-methyladenosine(2503) in 23S rRNA + 5'-deoxyadenosine + L-methionine + 2 oxidized [2Fe-2S]-[ferredoxin] + S-adenosyl-L-homocysteine</text>
        <dbReference type="Rhea" id="RHEA:42916"/>
        <dbReference type="Rhea" id="RHEA-COMP:10000"/>
        <dbReference type="Rhea" id="RHEA-COMP:10001"/>
        <dbReference type="Rhea" id="RHEA-COMP:10152"/>
        <dbReference type="Rhea" id="RHEA-COMP:10282"/>
        <dbReference type="ChEBI" id="CHEBI:17319"/>
        <dbReference type="ChEBI" id="CHEBI:33737"/>
        <dbReference type="ChEBI" id="CHEBI:33738"/>
        <dbReference type="ChEBI" id="CHEBI:57844"/>
        <dbReference type="ChEBI" id="CHEBI:57856"/>
        <dbReference type="ChEBI" id="CHEBI:59789"/>
        <dbReference type="ChEBI" id="CHEBI:74411"/>
        <dbReference type="ChEBI" id="CHEBI:74497"/>
        <dbReference type="EC" id="2.1.1.192"/>
    </reaction>
</comment>
<comment type="catalytic activity">
    <reaction evidence="1">
        <text>adenosine(37) in tRNA + 2 reduced [2Fe-2S]-[ferredoxin] + 2 S-adenosyl-L-methionine = 2-methyladenosine(37) in tRNA + 5'-deoxyadenosine + L-methionine + 2 oxidized [2Fe-2S]-[ferredoxin] + S-adenosyl-L-homocysteine</text>
        <dbReference type="Rhea" id="RHEA:43332"/>
        <dbReference type="Rhea" id="RHEA-COMP:10000"/>
        <dbReference type="Rhea" id="RHEA-COMP:10001"/>
        <dbReference type="Rhea" id="RHEA-COMP:10162"/>
        <dbReference type="Rhea" id="RHEA-COMP:10485"/>
        <dbReference type="ChEBI" id="CHEBI:17319"/>
        <dbReference type="ChEBI" id="CHEBI:33737"/>
        <dbReference type="ChEBI" id="CHEBI:33738"/>
        <dbReference type="ChEBI" id="CHEBI:57844"/>
        <dbReference type="ChEBI" id="CHEBI:57856"/>
        <dbReference type="ChEBI" id="CHEBI:59789"/>
        <dbReference type="ChEBI" id="CHEBI:74411"/>
        <dbReference type="ChEBI" id="CHEBI:74497"/>
        <dbReference type="EC" id="2.1.1.192"/>
    </reaction>
</comment>
<comment type="cofactor">
    <cofactor evidence="1">
        <name>[4Fe-4S] cluster</name>
        <dbReference type="ChEBI" id="CHEBI:49883"/>
    </cofactor>
    <text evidence="1">Binds 1 [4Fe-4S] cluster. The cluster is coordinated with 3 cysteines and an exchangeable S-adenosyl-L-methionine.</text>
</comment>
<comment type="subcellular location">
    <subcellularLocation>
        <location evidence="1">Cytoplasm</location>
    </subcellularLocation>
</comment>
<comment type="miscellaneous">
    <text evidence="1">Reaction proceeds by a ping-pong mechanism involving intermediate methylation of a conserved cysteine residue.</text>
</comment>
<comment type="similarity">
    <text evidence="1">Belongs to the radical SAM superfamily. RlmN family.</text>
</comment>
<sequence length="345" mass="38992">MMSKYPLLGMTLIELQSLVKRLGMPGFAAKQIASWLYDKKVTSIDEMTNLSLKYRELLKQNYEVGAEAPVEEMRSVDGTVKYLYPVGENHFVESVYIPDDERATLCISSQVGCKMNCKFCMTGKQGYSANLTAHQIINQIHSLPERDKLTNVVMMGMGEPLDNLEEVLKALDILTGSYGYAWSPKRITVSTVGLRKGLRRFIEESDCHLAISLHSPVTAQRAELMPAEKAFSITEMVELLKNYDFSKQRRLSFEYIVFKGLNDSQVYAKELLKLLRGLDCRMNLIRFHSIPGVALEGADMDTMTRFRDYLTTHGLFTTIRASRGEDIFAACGMLSTAKQEENNKS</sequence>
<dbReference type="EC" id="2.1.1.192" evidence="1"/>
<dbReference type="EMBL" id="AE015928">
    <property type="protein sequence ID" value="AAO79477.1"/>
    <property type="molecule type" value="Genomic_DNA"/>
</dbReference>
<dbReference type="RefSeq" id="NP_813283.1">
    <property type="nucleotide sequence ID" value="NC_004663.1"/>
</dbReference>
<dbReference type="SMR" id="Q89ZK5"/>
<dbReference type="FunCoup" id="Q89ZK5">
    <property type="interactions" value="507"/>
</dbReference>
<dbReference type="STRING" id="226186.BT_4372"/>
<dbReference type="PaxDb" id="226186-BT_4372"/>
<dbReference type="DNASU" id="1074789"/>
<dbReference type="EnsemblBacteria" id="AAO79477">
    <property type="protein sequence ID" value="AAO79477"/>
    <property type="gene ID" value="BT_4372"/>
</dbReference>
<dbReference type="KEGG" id="bth:BT_4372"/>
<dbReference type="PATRIC" id="fig|226186.12.peg.4449"/>
<dbReference type="eggNOG" id="COG0820">
    <property type="taxonomic scope" value="Bacteria"/>
</dbReference>
<dbReference type="HOGENOM" id="CLU_029101_0_0_10"/>
<dbReference type="InParanoid" id="Q89ZK5"/>
<dbReference type="OrthoDB" id="9793973at2"/>
<dbReference type="Proteomes" id="UP000001414">
    <property type="component" value="Chromosome"/>
</dbReference>
<dbReference type="GO" id="GO:0005737">
    <property type="term" value="C:cytoplasm"/>
    <property type="evidence" value="ECO:0007669"/>
    <property type="project" value="UniProtKB-SubCell"/>
</dbReference>
<dbReference type="GO" id="GO:0051539">
    <property type="term" value="F:4 iron, 4 sulfur cluster binding"/>
    <property type="evidence" value="ECO:0007669"/>
    <property type="project" value="UniProtKB-UniRule"/>
</dbReference>
<dbReference type="GO" id="GO:0046872">
    <property type="term" value="F:metal ion binding"/>
    <property type="evidence" value="ECO:0007669"/>
    <property type="project" value="UniProtKB-KW"/>
</dbReference>
<dbReference type="GO" id="GO:0070040">
    <property type="term" value="F:rRNA (adenine(2503)-C2-)-methyltransferase activity"/>
    <property type="evidence" value="ECO:0007669"/>
    <property type="project" value="UniProtKB-UniRule"/>
</dbReference>
<dbReference type="GO" id="GO:0019843">
    <property type="term" value="F:rRNA binding"/>
    <property type="evidence" value="ECO:0007669"/>
    <property type="project" value="UniProtKB-UniRule"/>
</dbReference>
<dbReference type="GO" id="GO:0002935">
    <property type="term" value="F:tRNA (adenine(37)-C2)-methyltransferase activity"/>
    <property type="evidence" value="ECO:0007669"/>
    <property type="project" value="UniProtKB-UniRule"/>
</dbReference>
<dbReference type="GO" id="GO:0000049">
    <property type="term" value="F:tRNA binding"/>
    <property type="evidence" value="ECO:0007669"/>
    <property type="project" value="UniProtKB-UniRule"/>
</dbReference>
<dbReference type="GO" id="GO:0070475">
    <property type="term" value="P:rRNA base methylation"/>
    <property type="evidence" value="ECO:0000318"/>
    <property type="project" value="GO_Central"/>
</dbReference>
<dbReference type="GO" id="GO:0030488">
    <property type="term" value="P:tRNA methylation"/>
    <property type="evidence" value="ECO:0000318"/>
    <property type="project" value="GO_Central"/>
</dbReference>
<dbReference type="CDD" id="cd01335">
    <property type="entry name" value="Radical_SAM"/>
    <property type="match status" value="1"/>
</dbReference>
<dbReference type="FunFam" id="1.10.150.530:FF:000006">
    <property type="entry name" value="Probable dual-specificity RNA methyltransferase RlmN"/>
    <property type="match status" value="1"/>
</dbReference>
<dbReference type="FunFam" id="3.20.20.70:FF:000014">
    <property type="entry name" value="Probable dual-specificity RNA methyltransferase RlmN"/>
    <property type="match status" value="1"/>
</dbReference>
<dbReference type="Gene3D" id="1.10.150.530">
    <property type="match status" value="1"/>
</dbReference>
<dbReference type="Gene3D" id="3.20.20.70">
    <property type="entry name" value="Aldolase class I"/>
    <property type="match status" value="1"/>
</dbReference>
<dbReference type="HAMAP" id="MF_01849">
    <property type="entry name" value="RNA_methyltr_RlmN"/>
    <property type="match status" value="1"/>
</dbReference>
<dbReference type="InterPro" id="IPR013785">
    <property type="entry name" value="Aldolase_TIM"/>
</dbReference>
<dbReference type="InterPro" id="IPR040072">
    <property type="entry name" value="Methyltransferase_A"/>
</dbReference>
<dbReference type="InterPro" id="IPR048641">
    <property type="entry name" value="RlmN_N"/>
</dbReference>
<dbReference type="InterPro" id="IPR027492">
    <property type="entry name" value="RNA_MTrfase_RlmN"/>
</dbReference>
<dbReference type="InterPro" id="IPR004383">
    <property type="entry name" value="rRNA_lsu_MTrfase_RlmN/Cfr"/>
</dbReference>
<dbReference type="InterPro" id="IPR007197">
    <property type="entry name" value="rSAM"/>
</dbReference>
<dbReference type="NCBIfam" id="TIGR00048">
    <property type="entry name" value="rRNA_mod_RlmN"/>
    <property type="match status" value="1"/>
</dbReference>
<dbReference type="PANTHER" id="PTHR30544">
    <property type="entry name" value="23S RRNA METHYLTRANSFERASE"/>
    <property type="match status" value="1"/>
</dbReference>
<dbReference type="PANTHER" id="PTHR30544:SF5">
    <property type="entry name" value="RADICAL SAM CORE DOMAIN-CONTAINING PROTEIN"/>
    <property type="match status" value="1"/>
</dbReference>
<dbReference type="Pfam" id="PF04055">
    <property type="entry name" value="Radical_SAM"/>
    <property type="match status" value="1"/>
</dbReference>
<dbReference type="Pfam" id="PF21016">
    <property type="entry name" value="RlmN_N"/>
    <property type="match status" value="1"/>
</dbReference>
<dbReference type="PIRSF" id="PIRSF006004">
    <property type="entry name" value="CHP00048"/>
    <property type="match status" value="1"/>
</dbReference>
<dbReference type="SFLD" id="SFLDF00275">
    <property type="entry name" value="adenosine_C2_methyltransferase"/>
    <property type="match status" value="1"/>
</dbReference>
<dbReference type="SFLD" id="SFLDG01062">
    <property type="entry name" value="methyltransferase_(Class_A)"/>
    <property type="match status" value="1"/>
</dbReference>
<dbReference type="SUPFAM" id="SSF102114">
    <property type="entry name" value="Radical SAM enzymes"/>
    <property type="match status" value="1"/>
</dbReference>
<dbReference type="PROSITE" id="PS51918">
    <property type="entry name" value="RADICAL_SAM"/>
    <property type="match status" value="1"/>
</dbReference>
<gene>
    <name evidence="1" type="primary">rlmN</name>
    <name type="ordered locus">BT_4372</name>
</gene>
<proteinExistence type="inferred from homology"/>
<feature type="chain" id="PRO_0000350042" description="Probable dual-specificity RNA methyltransferase RlmN">
    <location>
        <begin position="1"/>
        <end position="345"/>
    </location>
</feature>
<feature type="domain" description="Radical SAM core" evidence="2">
    <location>
        <begin position="99"/>
        <end position="326"/>
    </location>
</feature>
<feature type="active site" description="Proton acceptor" evidence="1">
    <location>
        <position position="93"/>
    </location>
</feature>
<feature type="active site" description="S-methylcysteine intermediate" evidence="1">
    <location>
        <position position="331"/>
    </location>
</feature>
<feature type="binding site" evidence="1">
    <location>
        <position position="113"/>
    </location>
    <ligand>
        <name>[4Fe-4S] cluster</name>
        <dbReference type="ChEBI" id="CHEBI:49883"/>
        <note>4Fe-4S-S-AdoMet</note>
    </ligand>
</feature>
<feature type="binding site" evidence="1">
    <location>
        <position position="117"/>
    </location>
    <ligand>
        <name>[4Fe-4S] cluster</name>
        <dbReference type="ChEBI" id="CHEBI:49883"/>
        <note>4Fe-4S-S-AdoMet</note>
    </ligand>
</feature>
<feature type="binding site" evidence="1">
    <location>
        <position position="120"/>
    </location>
    <ligand>
        <name>[4Fe-4S] cluster</name>
        <dbReference type="ChEBI" id="CHEBI:49883"/>
        <note>4Fe-4S-S-AdoMet</note>
    </ligand>
</feature>
<feature type="binding site" evidence="1">
    <location>
        <begin position="158"/>
        <end position="159"/>
    </location>
    <ligand>
        <name>S-adenosyl-L-methionine</name>
        <dbReference type="ChEBI" id="CHEBI:59789"/>
    </ligand>
</feature>
<feature type="binding site" evidence="1">
    <location>
        <position position="190"/>
    </location>
    <ligand>
        <name>S-adenosyl-L-methionine</name>
        <dbReference type="ChEBI" id="CHEBI:59789"/>
    </ligand>
</feature>
<feature type="binding site" evidence="1">
    <location>
        <begin position="212"/>
        <end position="214"/>
    </location>
    <ligand>
        <name>S-adenosyl-L-methionine</name>
        <dbReference type="ChEBI" id="CHEBI:59789"/>
    </ligand>
</feature>
<feature type="binding site" evidence="1">
    <location>
        <position position="288"/>
    </location>
    <ligand>
        <name>S-adenosyl-L-methionine</name>
        <dbReference type="ChEBI" id="CHEBI:59789"/>
    </ligand>
</feature>
<feature type="disulfide bond" description="(transient)" evidence="1">
    <location>
        <begin position="106"/>
        <end position="331"/>
    </location>
</feature>
<reference key="1">
    <citation type="journal article" date="2003" name="Science">
        <title>A genomic view of the human-Bacteroides thetaiotaomicron symbiosis.</title>
        <authorList>
            <person name="Xu J."/>
            <person name="Bjursell M.K."/>
            <person name="Himrod J."/>
            <person name="Deng S."/>
            <person name="Carmichael L.K."/>
            <person name="Chiang H.C."/>
            <person name="Hooper L.V."/>
            <person name="Gordon J.I."/>
        </authorList>
    </citation>
    <scope>NUCLEOTIDE SEQUENCE [LARGE SCALE GENOMIC DNA]</scope>
    <source>
        <strain>ATCC 29148 / DSM 2079 / JCM 5827 / CCUG 10774 / NCTC 10582 / VPI-5482 / E50</strain>
    </source>
</reference>
<accession>Q89ZK5</accession>
<evidence type="ECO:0000255" key="1">
    <source>
        <dbReference type="HAMAP-Rule" id="MF_01849"/>
    </source>
</evidence>
<evidence type="ECO:0000255" key="2">
    <source>
        <dbReference type="PROSITE-ProRule" id="PRU01266"/>
    </source>
</evidence>
<organism>
    <name type="scientific">Bacteroides thetaiotaomicron (strain ATCC 29148 / DSM 2079 / JCM 5827 / CCUG 10774 / NCTC 10582 / VPI-5482 / E50)</name>
    <dbReference type="NCBI Taxonomy" id="226186"/>
    <lineage>
        <taxon>Bacteria</taxon>
        <taxon>Pseudomonadati</taxon>
        <taxon>Bacteroidota</taxon>
        <taxon>Bacteroidia</taxon>
        <taxon>Bacteroidales</taxon>
        <taxon>Bacteroidaceae</taxon>
        <taxon>Bacteroides</taxon>
    </lineage>
</organism>